<dbReference type="EMBL" id="L77117">
    <property type="protein sequence ID" value="AAB99052.1"/>
    <property type="molecule type" value="Genomic_DNA"/>
</dbReference>
<dbReference type="PIR" id="G64430">
    <property type="entry name" value="G64430"/>
</dbReference>
<dbReference type="RefSeq" id="WP_010870561.1">
    <property type="nucleotide sequence ID" value="NC_000909.1"/>
</dbReference>
<dbReference type="SMR" id="Q58448"/>
<dbReference type="FunCoup" id="Q58448">
    <property type="interactions" value="212"/>
</dbReference>
<dbReference type="STRING" id="243232.MJ_1048"/>
<dbReference type="PaxDb" id="243232-MJ_1048"/>
<dbReference type="EnsemblBacteria" id="AAB99052">
    <property type="protein sequence ID" value="AAB99052"/>
    <property type="gene ID" value="MJ_1048"/>
</dbReference>
<dbReference type="GeneID" id="1451945"/>
<dbReference type="KEGG" id="mja:MJ_1048"/>
<dbReference type="eggNOG" id="arCOG01559">
    <property type="taxonomic scope" value="Archaea"/>
</dbReference>
<dbReference type="HOGENOM" id="CLU_002794_11_1_2"/>
<dbReference type="InParanoid" id="Q58448"/>
<dbReference type="OrthoDB" id="6290at2157"/>
<dbReference type="PhylomeDB" id="Q58448"/>
<dbReference type="Proteomes" id="UP000000805">
    <property type="component" value="Chromosome"/>
</dbReference>
<dbReference type="GO" id="GO:0005829">
    <property type="term" value="C:cytosol"/>
    <property type="evidence" value="ECO:0000318"/>
    <property type="project" value="GO_Central"/>
</dbReference>
<dbReference type="GO" id="GO:1990904">
    <property type="term" value="C:ribonucleoprotein complex"/>
    <property type="evidence" value="ECO:0000318"/>
    <property type="project" value="GO_Central"/>
</dbReference>
<dbReference type="GO" id="GO:0005525">
    <property type="term" value="F:GTP binding"/>
    <property type="evidence" value="ECO:0007669"/>
    <property type="project" value="UniProtKB-UniRule"/>
</dbReference>
<dbReference type="GO" id="GO:0003924">
    <property type="term" value="F:GTPase activity"/>
    <property type="evidence" value="ECO:0000318"/>
    <property type="project" value="GO_Central"/>
</dbReference>
<dbReference type="GO" id="GO:0003746">
    <property type="term" value="F:translation elongation factor activity"/>
    <property type="evidence" value="ECO:0000318"/>
    <property type="project" value="GO_Central"/>
</dbReference>
<dbReference type="GO" id="GO:0006414">
    <property type="term" value="P:translational elongation"/>
    <property type="evidence" value="ECO:0000318"/>
    <property type="project" value="GO_Central"/>
</dbReference>
<dbReference type="CDD" id="cd01681">
    <property type="entry name" value="aeEF2_snRNP_like_IV"/>
    <property type="match status" value="1"/>
</dbReference>
<dbReference type="CDD" id="cd01885">
    <property type="entry name" value="EF2"/>
    <property type="match status" value="1"/>
</dbReference>
<dbReference type="CDD" id="cd16268">
    <property type="entry name" value="EF2_II"/>
    <property type="match status" value="1"/>
</dbReference>
<dbReference type="CDD" id="cd16261">
    <property type="entry name" value="EF2_snRNP_III"/>
    <property type="match status" value="1"/>
</dbReference>
<dbReference type="CDD" id="cd01514">
    <property type="entry name" value="Elongation_Factor_C"/>
    <property type="match status" value="1"/>
</dbReference>
<dbReference type="FunFam" id="3.30.230.10:FF:000009">
    <property type="entry name" value="116 kDa U5 small nuclear ribonucleoprotein component"/>
    <property type="match status" value="1"/>
</dbReference>
<dbReference type="FunFam" id="3.30.70.240:FF:000010">
    <property type="entry name" value="Elongation factor 2"/>
    <property type="match status" value="1"/>
</dbReference>
<dbReference type="FunFam" id="3.40.50.300:FF:000684">
    <property type="entry name" value="Elongation factor 2"/>
    <property type="match status" value="1"/>
</dbReference>
<dbReference type="FunFam" id="3.30.70.870:FF:000002">
    <property type="entry name" value="Translation elongation factor 2"/>
    <property type="match status" value="1"/>
</dbReference>
<dbReference type="Gene3D" id="3.30.230.10">
    <property type="match status" value="1"/>
</dbReference>
<dbReference type="Gene3D" id="3.30.70.240">
    <property type="match status" value="1"/>
</dbReference>
<dbReference type="Gene3D" id="3.30.70.870">
    <property type="entry name" value="Elongation Factor G (Translational Gtpase), domain 3"/>
    <property type="match status" value="1"/>
</dbReference>
<dbReference type="Gene3D" id="3.40.50.300">
    <property type="entry name" value="P-loop containing nucleotide triphosphate hydrolases"/>
    <property type="match status" value="1"/>
</dbReference>
<dbReference type="Gene3D" id="2.40.30.10">
    <property type="entry name" value="Translation factors"/>
    <property type="match status" value="1"/>
</dbReference>
<dbReference type="HAMAP" id="MF_00054_A">
    <property type="entry name" value="EF_G_EF_2_A"/>
    <property type="match status" value="1"/>
</dbReference>
<dbReference type="InterPro" id="IPR041095">
    <property type="entry name" value="EFG_II"/>
</dbReference>
<dbReference type="InterPro" id="IPR035647">
    <property type="entry name" value="EFG_III/V"/>
</dbReference>
<dbReference type="InterPro" id="IPR000640">
    <property type="entry name" value="EFG_V-like"/>
</dbReference>
<dbReference type="InterPro" id="IPR004161">
    <property type="entry name" value="EFTu-like_2"/>
</dbReference>
<dbReference type="InterPro" id="IPR031157">
    <property type="entry name" value="G_TR_CS"/>
</dbReference>
<dbReference type="InterPro" id="IPR027417">
    <property type="entry name" value="P-loop_NTPase"/>
</dbReference>
<dbReference type="InterPro" id="IPR020568">
    <property type="entry name" value="Ribosomal_Su5_D2-typ_SF"/>
</dbReference>
<dbReference type="InterPro" id="IPR014721">
    <property type="entry name" value="Ribsml_uS5_D2-typ_fold_subgr"/>
</dbReference>
<dbReference type="InterPro" id="IPR005225">
    <property type="entry name" value="Small_GTP-bd"/>
</dbReference>
<dbReference type="InterPro" id="IPR000795">
    <property type="entry name" value="T_Tr_GTP-bd_dom"/>
</dbReference>
<dbReference type="InterPro" id="IPR009000">
    <property type="entry name" value="Transl_B-barrel_sf"/>
</dbReference>
<dbReference type="InterPro" id="IPR004543">
    <property type="entry name" value="Transl_elong_EFG/EF2_arc"/>
</dbReference>
<dbReference type="InterPro" id="IPR005517">
    <property type="entry name" value="Transl_elong_EFG/EF2_IV"/>
</dbReference>
<dbReference type="NCBIfam" id="TIGR00490">
    <property type="entry name" value="aEF-2"/>
    <property type="match status" value="1"/>
</dbReference>
<dbReference type="NCBIfam" id="TIGR00231">
    <property type="entry name" value="small_GTP"/>
    <property type="match status" value="1"/>
</dbReference>
<dbReference type="PANTHER" id="PTHR42908:SF3">
    <property type="entry name" value="ELONGATION FACTOR-LIKE GTPASE 1"/>
    <property type="match status" value="1"/>
</dbReference>
<dbReference type="PANTHER" id="PTHR42908">
    <property type="entry name" value="TRANSLATION ELONGATION FACTOR-RELATED"/>
    <property type="match status" value="1"/>
</dbReference>
<dbReference type="Pfam" id="PF00679">
    <property type="entry name" value="EFG_C"/>
    <property type="match status" value="1"/>
</dbReference>
<dbReference type="Pfam" id="PF14492">
    <property type="entry name" value="EFG_III"/>
    <property type="match status" value="1"/>
</dbReference>
<dbReference type="Pfam" id="PF03764">
    <property type="entry name" value="EFG_IV"/>
    <property type="match status" value="1"/>
</dbReference>
<dbReference type="Pfam" id="PF00009">
    <property type="entry name" value="GTP_EFTU"/>
    <property type="match status" value="1"/>
</dbReference>
<dbReference type="Pfam" id="PF03144">
    <property type="entry name" value="GTP_EFTU_D2"/>
    <property type="match status" value="1"/>
</dbReference>
<dbReference type="PRINTS" id="PR00315">
    <property type="entry name" value="ELONGATNFCT"/>
</dbReference>
<dbReference type="SMART" id="SM00838">
    <property type="entry name" value="EFG_C"/>
    <property type="match status" value="1"/>
</dbReference>
<dbReference type="SMART" id="SM00889">
    <property type="entry name" value="EFG_IV"/>
    <property type="match status" value="1"/>
</dbReference>
<dbReference type="SUPFAM" id="SSF54980">
    <property type="entry name" value="EF-G C-terminal domain-like"/>
    <property type="match status" value="2"/>
</dbReference>
<dbReference type="SUPFAM" id="SSF52540">
    <property type="entry name" value="P-loop containing nucleoside triphosphate hydrolases"/>
    <property type="match status" value="1"/>
</dbReference>
<dbReference type="SUPFAM" id="SSF54211">
    <property type="entry name" value="Ribosomal protein S5 domain 2-like"/>
    <property type="match status" value="1"/>
</dbReference>
<dbReference type="SUPFAM" id="SSF50447">
    <property type="entry name" value="Translation proteins"/>
    <property type="match status" value="1"/>
</dbReference>
<dbReference type="PROSITE" id="PS00301">
    <property type="entry name" value="G_TR_1"/>
    <property type="match status" value="1"/>
</dbReference>
<dbReference type="PROSITE" id="PS51722">
    <property type="entry name" value="G_TR_2"/>
    <property type="match status" value="1"/>
</dbReference>
<name>EF2_METJA</name>
<evidence type="ECO:0000250" key="1"/>
<evidence type="ECO:0000305" key="2"/>
<sequence>MGKRAKMIAKIKELMEKYDRIRNIGICAHIDHGKTTLSDNLLAGAGMISKELAGEQLALDFDEEEAQRGITIFAANVSMVHTYEGNEYLINLIDTPGHVDFGGDVTRAMRAIDGAIVVVCAVEGVMPQTETVLRQALRERVKPVLFINKVDRLINELKLTPEELQSRFIKIINDINNLIRKMAPEEFKDKWLVRVEDGSVAFGSAYNNWAISVPFMKKSGITFKDIIKYCEEDRQDELAEKAPLHEVVLDMVIKHLPSPPEAQKYRIPHLWKGDLNSEAGKAMLNCDPNGPLAGVITKIIVDKHAGAVSVCRLFSGRIKQGDEVYMVNNQQKAKIQQVSVFMGPERIPVDSISAGNICALVGLKEASAGETICSPDKIIEPFEAITHISEPVITVAIEAKNTKDLPKLIEVLRQVAREDPTVKVEINEETGEHLLSGMGELHIEIITKLKIERDAGIPVEVGQPIVVYRETVTGQSPVVESKSPNKHNKLYFVVEPLEESVLQAYKEGRIPDVDTKRKLDDKIVQELIKAGMDPEEAKRVMCIYEGNVLINMTRGIVHLDEVKELIIQGFKEAMRNGPLAAEKCQGVKVKLMDAVLHEDAIHRGPAQMIPAARFGIRDAMMQANPVLLEPMQFVYINTPQDFMGAAMREISNRRGQILDMEQEGDMAIIKAKCPVAEMFGFAGAIRGATQGRCLWSIEFAGYEKVPRDMQEQLIKQIRERKGLKLE</sequence>
<feature type="chain" id="PRO_0000091032" description="Elongation factor 2">
    <location>
        <begin position="1"/>
        <end position="726"/>
    </location>
</feature>
<feature type="domain" description="tr-type G">
    <location>
        <begin position="19"/>
        <end position="260"/>
    </location>
</feature>
<feature type="binding site" evidence="1">
    <location>
        <begin position="28"/>
        <end position="35"/>
    </location>
    <ligand>
        <name>GTP</name>
        <dbReference type="ChEBI" id="CHEBI:37565"/>
    </ligand>
</feature>
<feature type="binding site" evidence="1">
    <location>
        <begin position="94"/>
        <end position="98"/>
    </location>
    <ligand>
        <name>GTP</name>
        <dbReference type="ChEBI" id="CHEBI:37565"/>
    </ligand>
</feature>
<feature type="binding site" evidence="1">
    <location>
        <begin position="148"/>
        <end position="151"/>
    </location>
    <ligand>
        <name>GTP</name>
        <dbReference type="ChEBI" id="CHEBI:37565"/>
    </ligand>
</feature>
<feature type="modified residue" description="Diphthamide" evidence="1">
    <location>
        <position position="602"/>
    </location>
</feature>
<comment type="function">
    <text evidence="1">Catalyzes the GTP-dependent ribosomal translocation step during translation elongation. During this step, the ribosome changes from the pre-translocational (PRE) to the post-translocational (POST) state as the newly formed A-site-bound peptidyl-tRNA and P-site-bound deacylated tRNA move to the P and E sites, respectively. Catalyzes the coordinated movement of the two tRNA molecules, the mRNA and conformational changes in the ribosome (By similarity).</text>
</comment>
<comment type="subcellular location">
    <subcellularLocation>
        <location evidence="1">Cytoplasm</location>
    </subcellularLocation>
</comment>
<comment type="similarity">
    <text evidence="2">Belongs to the TRAFAC class translation factor GTPase superfamily. Classic translation factor GTPase family. EF-G/EF-2 subfamily.</text>
</comment>
<reference key="1">
    <citation type="journal article" date="1996" name="Science">
        <title>Complete genome sequence of the methanogenic archaeon, Methanococcus jannaschii.</title>
        <authorList>
            <person name="Bult C.J."/>
            <person name="White O."/>
            <person name="Olsen G.J."/>
            <person name="Zhou L."/>
            <person name="Fleischmann R.D."/>
            <person name="Sutton G.G."/>
            <person name="Blake J.A."/>
            <person name="FitzGerald L.M."/>
            <person name="Clayton R.A."/>
            <person name="Gocayne J.D."/>
            <person name="Kerlavage A.R."/>
            <person name="Dougherty B.A."/>
            <person name="Tomb J.-F."/>
            <person name="Adams M.D."/>
            <person name="Reich C.I."/>
            <person name="Overbeek R."/>
            <person name="Kirkness E.F."/>
            <person name="Weinstock K.G."/>
            <person name="Merrick J.M."/>
            <person name="Glodek A."/>
            <person name="Scott J.L."/>
            <person name="Geoghagen N.S.M."/>
            <person name="Weidman J.F."/>
            <person name="Fuhrmann J.L."/>
            <person name="Nguyen D."/>
            <person name="Utterback T.R."/>
            <person name="Kelley J.M."/>
            <person name="Peterson J.D."/>
            <person name="Sadow P.W."/>
            <person name="Hanna M.C."/>
            <person name="Cotton M.D."/>
            <person name="Roberts K.M."/>
            <person name="Hurst M.A."/>
            <person name="Kaine B.P."/>
            <person name="Borodovsky M."/>
            <person name="Klenk H.-P."/>
            <person name="Fraser C.M."/>
            <person name="Smith H.O."/>
            <person name="Woese C.R."/>
            <person name="Venter J.C."/>
        </authorList>
    </citation>
    <scope>NUCLEOTIDE SEQUENCE [LARGE SCALE GENOMIC DNA]</scope>
    <source>
        <strain>ATCC 43067 / DSM 2661 / JAL-1 / JCM 10045 / NBRC 100440</strain>
    </source>
</reference>
<gene>
    <name type="primary">fusA</name>
    <name type="synonym">fus</name>
    <name type="ordered locus">MJ1048</name>
</gene>
<accession>Q58448</accession>
<organism>
    <name type="scientific">Methanocaldococcus jannaschii (strain ATCC 43067 / DSM 2661 / JAL-1 / JCM 10045 / NBRC 100440)</name>
    <name type="common">Methanococcus jannaschii</name>
    <dbReference type="NCBI Taxonomy" id="243232"/>
    <lineage>
        <taxon>Archaea</taxon>
        <taxon>Methanobacteriati</taxon>
        <taxon>Methanobacteriota</taxon>
        <taxon>Methanomada group</taxon>
        <taxon>Methanococci</taxon>
        <taxon>Methanococcales</taxon>
        <taxon>Methanocaldococcaceae</taxon>
        <taxon>Methanocaldococcus</taxon>
    </lineage>
</organism>
<protein>
    <recommendedName>
        <fullName>Elongation factor 2</fullName>
        <shortName>EF-2</shortName>
    </recommendedName>
</protein>
<keyword id="KW-0963">Cytoplasm</keyword>
<keyword id="KW-0251">Elongation factor</keyword>
<keyword id="KW-0342">GTP-binding</keyword>
<keyword id="KW-0547">Nucleotide-binding</keyword>
<keyword id="KW-0648">Protein biosynthesis</keyword>
<keyword id="KW-1185">Reference proteome</keyword>
<proteinExistence type="inferred from homology"/>